<keyword id="KW-0963">Cytoplasm</keyword>
<keyword id="KW-1185">Reference proteome</keyword>
<comment type="subcellular location">
    <subcellularLocation>
        <location evidence="1">Cytoplasm</location>
    </subcellularLocation>
</comment>
<comment type="similarity">
    <text evidence="1">Belongs to the UPF0291 family.</text>
</comment>
<evidence type="ECO:0000255" key="1">
    <source>
        <dbReference type="HAMAP-Rule" id="MF_01103"/>
    </source>
</evidence>
<evidence type="ECO:0000256" key="2">
    <source>
        <dbReference type="SAM" id="MobiDB-lite"/>
    </source>
</evidence>
<accession>Q5WG05</accession>
<sequence>MSKEKLDRINELSKLAKTVGLTKKQAMEQKALRNEYLSAFRSSFTDHLHTVKVVDAKGNDVTPQKLKDSKAQKHKRLH</sequence>
<name>Y2165_SHOC1</name>
<protein>
    <recommendedName>
        <fullName evidence="1">UPF0291 protein ABC2165</fullName>
    </recommendedName>
</protein>
<organism>
    <name type="scientific">Shouchella clausii (strain KSM-K16)</name>
    <name type="common">Alkalihalobacillus clausii</name>
    <dbReference type="NCBI Taxonomy" id="66692"/>
    <lineage>
        <taxon>Bacteria</taxon>
        <taxon>Bacillati</taxon>
        <taxon>Bacillota</taxon>
        <taxon>Bacilli</taxon>
        <taxon>Bacillales</taxon>
        <taxon>Bacillaceae</taxon>
        <taxon>Shouchella</taxon>
    </lineage>
</organism>
<dbReference type="EMBL" id="AP006627">
    <property type="protein sequence ID" value="BAD64700.1"/>
    <property type="molecule type" value="Genomic_DNA"/>
</dbReference>
<dbReference type="SMR" id="Q5WG05"/>
<dbReference type="STRING" id="66692.ABC2165"/>
<dbReference type="KEGG" id="bcl:ABC2165"/>
<dbReference type="eggNOG" id="COG4224">
    <property type="taxonomic scope" value="Bacteria"/>
</dbReference>
<dbReference type="HOGENOM" id="CLU_173137_0_2_9"/>
<dbReference type="Proteomes" id="UP000001168">
    <property type="component" value="Chromosome"/>
</dbReference>
<dbReference type="GO" id="GO:0005737">
    <property type="term" value="C:cytoplasm"/>
    <property type="evidence" value="ECO:0007669"/>
    <property type="project" value="UniProtKB-SubCell"/>
</dbReference>
<dbReference type="Gene3D" id="1.10.287.540">
    <property type="entry name" value="Helix hairpin bin"/>
    <property type="match status" value="1"/>
</dbReference>
<dbReference type="HAMAP" id="MF_01103">
    <property type="entry name" value="UPF0291"/>
    <property type="match status" value="1"/>
</dbReference>
<dbReference type="InterPro" id="IPR009242">
    <property type="entry name" value="DUF896"/>
</dbReference>
<dbReference type="PANTHER" id="PTHR37300:SF2">
    <property type="entry name" value="UPF0291 PROTEIN BC_1827"/>
    <property type="match status" value="1"/>
</dbReference>
<dbReference type="PANTHER" id="PTHR37300">
    <property type="entry name" value="UPF0291 PROTEIN CBO2609/CLC_2481"/>
    <property type="match status" value="1"/>
</dbReference>
<dbReference type="Pfam" id="PF05979">
    <property type="entry name" value="DUF896"/>
    <property type="match status" value="1"/>
</dbReference>
<dbReference type="SUPFAM" id="SSF158221">
    <property type="entry name" value="YnzC-like"/>
    <property type="match status" value="1"/>
</dbReference>
<reference key="1">
    <citation type="submission" date="2003-10" db="EMBL/GenBank/DDBJ databases">
        <title>The complete genome sequence of the alkaliphilic Bacillus clausii KSM-K16.</title>
        <authorList>
            <person name="Takaki Y."/>
            <person name="Kageyama Y."/>
            <person name="Shimamura S."/>
            <person name="Suzuki H."/>
            <person name="Nishi S."/>
            <person name="Hatada Y."/>
            <person name="Kawai S."/>
            <person name="Ito S."/>
            <person name="Horikoshi K."/>
        </authorList>
    </citation>
    <scope>NUCLEOTIDE SEQUENCE [LARGE SCALE GENOMIC DNA]</scope>
    <source>
        <strain>KSM-K16</strain>
    </source>
</reference>
<proteinExistence type="inferred from homology"/>
<feature type="chain" id="PRO_0000094964" description="UPF0291 protein ABC2165">
    <location>
        <begin position="1"/>
        <end position="78"/>
    </location>
</feature>
<feature type="region of interest" description="Disordered" evidence="2">
    <location>
        <begin position="56"/>
        <end position="78"/>
    </location>
</feature>
<gene>
    <name type="ordered locus">ABC2165</name>
</gene>